<dbReference type="EMBL" id="DQ386642">
    <property type="protein sequence ID" value="ABD48954.1"/>
    <property type="molecule type" value="mRNA"/>
</dbReference>
<dbReference type="EMBL" id="AC005727">
    <property type="protein sequence ID" value="AAC79594.1"/>
    <property type="molecule type" value="Genomic_DNA"/>
</dbReference>
<dbReference type="EMBL" id="CP002685">
    <property type="protein sequence ID" value="AEC08186.1"/>
    <property type="molecule type" value="Genomic_DNA"/>
</dbReference>
<dbReference type="EMBL" id="AY045593">
    <property type="protein sequence ID" value="AAK73951.1"/>
    <property type="molecule type" value="mRNA"/>
</dbReference>
<dbReference type="EMBL" id="AY093782">
    <property type="protein sequence ID" value="AAM10398.1"/>
    <property type="molecule type" value="mRNA"/>
</dbReference>
<dbReference type="EMBL" id="AY084261">
    <property type="protein sequence ID" value="AAM60853.1"/>
    <property type="molecule type" value="mRNA"/>
</dbReference>
<dbReference type="PIR" id="C84690">
    <property type="entry name" value="C84690"/>
</dbReference>
<dbReference type="RefSeq" id="NP_180456.1">
    <property type="nucleotide sequence ID" value="NM_128449.3"/>
</dbReference>
<dbReference type="SMR" id="Q9ZV24"/>
<dbReference type="BioGRID" id="2789">
    <property type="interactions" value="4"/>
</dbReference>
<dbReference type="FunCoup" id="Q9ZV24">
    <property type="interactions" value="453"/>
</dbReference>
<dbReference type="IntAct" id="Q9ZV24">
    <property type="interactions" value="1"/>
</dbReference>
<dbReference type="STRING" id="3702.Q9ZV24"/>
<dbReference type="iPTMnet" id="Q9ZV24"/>
<dbReference type="PaxDb" id="3702-AT2G28900.1"/>
<dbReference type="ProteomicsDB" id="249364"/>
<dbReference type="DNASU" id="817439"/>
<dbReference type="EnsemblPlants" id="AT2G28900.1">
    <property type="protein sequence ID" value="AT2G28900.1"/>
    <property type="gene ID" value="AT2G28900"/>
</dbReference>
<dbReference type="GeneID" id="817439"/>
<dbReference type="Gramene" id="AT2G28900.1">
    <property type="protein sequence ID" value="AT2G28900.1"/>
    <property type="gene ID" value="AT2G28900"/>
</dbReference>
<dbReference type="KEGG" id="ath:AT2G28900"/>
<dbReference type="Araport" id="AT2G28900"/>
<dbReference type="TAIR" id="AT2G28900">
    <property type="gene designation" value="OEP16-1"/>
</dbReference>
<dbReference type="eggNOG" id="ENOG502RZS0">
    <property type="taxonomic scope" value="Eukaryota"/>
</dbReference>
<dbReference type="HOGENOM" id="CLU_100380_2_0_1"/>
<dbReference type="InParanoid" id="Q9ZV24"/>
<dbReference type="OMA" id="THDAEHT"/>
<dbReference type="OrthoDB" id="75343at2759"/>
<dbReference type="PhylomeDB" id="Q9ZV24"/>
<dbReference type="PRO" id="PR:Q9ZV24"/>
<dbReference type="Proteomes" id="UP000006548">
    <property type="component" value="Chromosome 2"/>
</dbReference>
<dbReference type="ExpressionAtlas" id="Q9ZV24">
    <property type="expression patterns" value="baseline and differential"/>
</dbReference>
<dbReference type="GO" id="GO:0009507">
    <property type="term" value="C:chloroplast"/>
    <property type="evidence" value="ECO:0007005"/>
    <property type="project" value="TAIR"/>
</dbReference>
<dbReference type="GO" id="GO:0009941">
    <property type="term" value="C:chloroplast envelope"/>
    <property type="evidence" value="ECO:0007005"/>
    <property type="project" value="TAIR"/>
</dbReference>
<dbReference type="GO" id="GO:0009707">
    <property type="term" value="C:chloroplast outer membrane"/>
    <property type="evidence" value="ECO:0000314"/>
    <property type="project" value="TAIR"/>
</dbReference>
<dbReference type="GO" id="GO:0034426">
    <property type="term" value="C:etioplast membrane"/>
    <property type="evidence" value="ECO:0007669"/>
    <property type="project" value="UniProtKB-SubCell"/>
</dbReference>
<dbReference type="GO" id="GO:0005777">
    <property type="term" value="C:peroxisome"/>
    <property type="evidence" value="ECO:0007005"/>
    <property type="project" value="TAIR"/>
</dbReference>
<dbReference type="GO" id="GO:0000325">
    <property type="term" value="C:plant-type vacuole"/>
    <property type="evidence" value="ECO:0007005"/>
    <property type="project" value="TAIR"/>
</dbReference>
<dbReference type="GO" id="GO:0009536">
    <property type="term" value="C:plastid"/>
    <property type="evidence" value="ECO:0007005"/>
    <property type="project" value="TAIR"/>
</dbReference>
<dbReference type="GO" id="GO:0009527">
    <property type="term" value="C:plastid outer membrane"/>
    <property type="evidence" value="ECO:0000314"/>
    <property type="project" value="TAIR"/>
</dbReference>
<dbReference type="GO" id="GO:0046930">
    <property type="term" value="C:pore complex"/>
    <property type="evidence" value="ECO:0007669"/>
    <property type="project" value="UniProtKB-KW"/>
</dbReference>
<dbReference type="GO" id="GO:0015171">
    <property type="term" value="F:amino acid transmembrane transporter activity"/>
    <property type="evidence" value="ECO:0000315"/>
    <property type="project" value="TAIR"/>
</dbReference>
<dbReference type="GO" id="GO:0003729">
    <property type="term" value="F:mRNA binding"/>
    <property type="evidence" value="ECO:0000314"/>
    <property type="project" value="TAIR"/>
</dbReference>
<dbReference type="GO" id="GO:0015288">
    <property type="term" value="F:porin activity"/>
    <property type="evidence" value="ECO:0007669"/>
    <property type="project" value="UniProtKB-KW"/>
</dbReference>
<dbReference type="GO" id="GO:0019904">
    <property type="term" value="F:protein domain specific binding"/>
    <property type="evidence" value="ECO:0000353"/>
    <property type="project" value="CAFA"/>
</dbReference>
<dbReference type="GO" id="GO:0042803">
    <property type="term" value="F:protein homodimerization activity"/>
    <property type="evidence" value="ECO:0000250"/>
    <property type="project" value="UniProtKB"/>
</dbReference>
<dbReference type="GO" id="GO:0006811">
    <property type="term" value="P:monoatomic ion transport"/>
    <property type="evidence" value="ECO:0007669"/>
    <property type="project" value="UniProtKB-KW"/>
</dbReference>
<dbReference type="GO" id="GO:0045037">
    <property type="term" value="P:protein import into chloroplast stroma"/>
    <property type="evidence" value="ECO:0000314"/>
    <property type="project" value="TAIR"/>
</dbReference>
<dbReference type="GO" id="GO:0009409">
    <property type="term" value="P:response to cold"/>
    <property type="evidence" value="ECO:0000270"/>
    <property type="project" value="TAIR"/>
</dbReference>
<dbReference type="GO" id="GO:0009749">
    <property type="term" value="P:response to glucose"/>
    <property type="evidence" value="ECO:0000270"/>
    <property type="project" value="TAIR"/>
</dbReference>
<dbReference type="GO" id="GO:0009753">
    <property type="term" value="P:response to jasmonic acid"/>
    <property type="evidence" value="ECO:0000270"/>
    <property type="project" value="TAIR"/>
</dbReference>
<dbReference type="GO" id="GO:0009744">
    <property type="term" value="P:response to sucrose"/>
    <property type="evidence" value="ECO:0000270"/>
    <property type="project" value="TAIR"/>
</dbReference>
<dbReference type="GO" id="GO:0009611">
    <property type="term" value="P:response to wounding"/>
    <property type="evidence" value="ECO:0000270"/>
    <property type="project" value="TAIR"/>
</dbReference>
<dbReference type="InterPro" id="IPR045238">
    <property type="entry name" value="Tim23-like"/>
</dbReference>
<dbReference type="PANTHER" id="PTHR15371:SF2">
    <property type="entry name" value="OUTER ENVELOPE PORE PROTEIN 16-1, CHLOROPLASTIC"/>
    <property type="match status" value="1"/>
</dbReference>
<dbReference type="PANTHER" id="PTHR15371">
    <property type="entry name" value="TIM23"/>
    <property type="match status" value="1"/>
</dbReference>
<dbReference type="Pfam" id="PF02466">
    <property type="entry name" value="Tim17"/>
    <property type="match status" value="1"/>
</dbReference>
<evidence type="ECO:0000250" key="1"/>
<evidence type="ECO:0000255" key="2"/>
<evidence type="ECO:0000269" key="3">
    <source>
    </source>
</evidence>
<evidence type="ECO:0000269" key="4">
    <source>
    </source>
</evidence>
<evidence type="ECO:0000269" key="5">
    <source>
    </source>
</evidence>
<evidence type="ECO:0000269" key="6">
    <source>
    </source>
</evidence>
<evidence type="ECO:0000269" key="7">
    <source>
    </source>
</evidence>
<evidence type="ECO:0000269" key="8">
    <source>
    </source>
</evidence>
<evidence type="ECO:0000269" key="9">
    <source>
    </source>
</evidence>
<evidence type="ECO:0000269" key="10">
    <source>
    </source>
</evidence>
<evidence type="ECO:0000269" key="11">
    <source>
    </source>
</evidence>
<evidence type="ECO:0000305" key="12"/>
<feature type="initiator methionine" description="Removed" evidence="3">
    <location>
        <position position="1"/>
    </location>
</feature>
<feature type="chain" id="PRO_0000415696" description="Outer envelope pore protein 16-1, chloroplastic">
    <location>
        <begin position="2"/>
        <end position="148"/>
    </location>
</feature>
<feature type="transmembrane region" description="Helical" evidence="2">
    <location>
        <begin position="75"/>
        <end position="91"/>
    </location>
</feature>
<feature type="transmembrane region" description="Helical" evidence="2">
    <location>
        <begin position="102"/>
        <end position="118"/>
    </location>
</feature>
<feature type="transmembrane region" description="Helical" evidence="2">
    <location>
        <begin position="125"/>
        <end position="142"/>
    </location>
</feature>
<feature type="region of interest" description="Contains 4 beta strands" evidence="1">
    <location>
        <begin position="2"/>
        <end position="73"/>
    </location>
</feature>
<feature type="sequence conflict" description="In Ref. 5; AAM60853." evidence="12" ref="5">
    <original>D</original>
    <variation>E</variation>
    <location>
        <position position="54"/>
    </location>
</feature>
<gene>
    <name type="primary">OEP161</name>
    <name type="synonym">PTC16</name>
    <name type="ordered locus">At2g28900</name>
    <name type="ORF">F8N16.19</name>
</gene>
<name>OP161_ARATH</name>
<accession>Q9ZV24</accession>
<accession>Q8LGH9</accession>
<reference key="1">
    <citation type="journal article" date="2007" name="Plant Physiol.">
        <title>Characterization of the preprotein and amino acid transporter gene family in Arabidopsis.</title>
        <authorList>
            <person name="Murcha M.W."/>
            <person name="Elhafez D."/>
            <person name="Lister R."/>
            <person name="Tonti-Filippini J."/>
            <person name="Baumgartner M."/>
            <person name="Philippar K."/>
            <person name="Carrie C."/>
            <person name="Mokranjac D."/>
            <person name="Soll J."/>
            <person name="Whelan J."/>
        </authorList>
    </citation>
    <scope>NUCLEOTIDE SEQUENCE [MRNA]</scope>
    <scope>SUBCELLULAR LOCATION</scope>
    <scope>REVIEW</scope>
</reference>
<reference key="2">
    <citation type="journal article" date="1999" name="Nature">
        <title>Sequence and analysis of chromosome 2 of the plant Arabidopsis thaliana.</title>
        <authorList>
            <person name="Lin X."/>
            <person name="Kaul S."/>
            <person name="Rounsley S.D."/>
            <person name="Shea T.P."/>
            <person name="Benito M.-I."/>
            <person name="Town C.D."/>
            <person name="Fujii C.Y."/>
            <person name="Mason T.M."/>
            <person name="Bowman C.L."/>
            <person name="Barnstead M.E."/>
            <person name="Feldblyum T.V."/>
            <person name="Buell C.R."/>
            <person name="Ketchum K.A."/>
            <person name="Lee J.J."/>
            <person name="Ronning C.M."/>
            <person name="Koo H.L."/>
            <person name="Moffat K.S."/>
            <person name="Cronin L.A."/>
            <person name="Shen M."/>
            <person name="Pai G."/>
            <person name="Van Aken S."/>
            <person name="Umayam L."/>
            <person name="Tallon L.J."/>
            <person name="Gill J.E."/>
            <person name="Adams M.D."/>
            <person name="Carrera A.J."/>
            <person name="Creasy T.H."/>
            <person name="Goodman H.M."/>
            <person name="Somerville C.R."/>
            <person name="Copenhaver G.P."/>
            <person name="Preuss D."/>
            <person name="Nierman W.C."/>
            <person name="White O."/>
            <person name="Eisen J.A."/>
            <person name="Salzberg S.L."/>
            <person name="Fraser C.M."/>
            <person name="Venter J.C."/>
        </authorList>
    </citation>
    <scope>NUCLEOTIDE SEQUENCE [LARGE SCALE GENOMIC DNA]</scope>
    <source>
        <strain>cv. Columbia</strain>
    </source>
</reference>
<reference key="3">
    <citation type="journal article" date="2017" name="Plant J.">
        <title>Araport11: a complete reannotation of the Arabidopsis thaliana reference genome.</title>
        <authorList>
            <person name="Cheng C.Y."/>
            <person name="Krishnakumar V."/>
            <person name="Chan A.P."/>
            <person name="Thibaud-Nissen F."/>
            <person name="Schobel S."/>
            <person name="Town C.D."/>
        </authorList>
    </citation>
    <scope>GENOME REANNOTATION</scope>
    <source>
        <strain>cv. Columbia</strain>
    </source>
</reference>
<reference key="4">
    <citation type="journal article" date="2003" name="Science">
        <title>Empirical analysis of transcriptional activity in the Arabidopsis genome.</title>
        <authorList>
            <person name="Yamada K."/>
            <person name="Lim J."/>
            <person name="Dale J.M."/>
            <person name="Chen H."/>
            <person name="Shinn P."/>
            <person name="Palm C.J."/>
            <person name="Southwick A.M."/>
            <person name="Wu H.C."/>
            <person name="Kim C.J."/>
            <person name="Nguyen M."/>
            <person name="Pham P.K."/>
            <person name="Cheuk R.F."/>
            <person name="Karlin-Newmann G."/>
            <person name="Liu S.X."/>
            <person name="Lam B."/>
            <person name="Sakano H."/>
            <person name="Wu T."/>
            <person name="Yu G."/>
            <person name="Miranda M."/>
            <person name="Quach H.L."/>
            <person name="Tripp M."/>
            <person name="Chang C.H."/>
            <person name="Lee J.M."/>
            <person name="Toriumi M.J."/>
            <person name="Chan M.M."/>
            <person name="Tang C.C."/>
            <person name="Onodera C.S."/>
            <person name="Deng J.M."/>
            <person name="Akiyama K."/>
            <person name="Ansari Y."/>
            <person name="Arakawa T."/>
            <person name="Banh J."/>
            <person name="Banno F."/>
            <person name="Bowser L."/>
            <person name="Brooks S.Y."/>
            <person name="Carninci P."/>
            <person name="Chao Q."/>
            <person name="Choy N."/>
            <person name="Enju A."/>
            <person name="Goldsmith A.D."/>
            <person name="Gurjal M."/>
            <person name="Hansen N.F."/>
            <person name="Hayashizaki Y."/>
            <person name="Johnson-Hopson C."/>
            <person name="Hsuan V.W."/>
            <person name="Iida K."/>
            <person name="Karnes M."/>
            <person name="Khan S."/>
            <person name="Koesema E."/>
            <person name="Ishida J."/>
            <person name="Jiang P.X."/>
            <person name="Jones T."/>
            <person name="Kawai J."/>
            <person name="Kamiya A."/>
            <person name="Meyers C."/>
            <person name="Nakajima M."/>
            <person name="Narusaka M."/>
            <person name="Seki M."/>
            <person name="Sakurai T."/>
            <person name="Satou M."/>
            <person name="Tamse R."/>
            <person name="Vaysberg M."/>
            <person name="Wallender E.K."/>
            <person name="Wong C."/>
            <person name="Yamamura Y."/>
            <person name="Yuan S."/>
            <person name="Shinozaki K."/>
            <person name="Davis R.W."/>
            <person name="Theologis A."/>
            <person name="Ecker J.R."/>
        </authorList>
    </citation>
    <scope>NUCLEOTIDE SEQUENCE [LARGE SCALE MRNA]</scope>
    <source>
        <strain>cv. Columbia</strain>
    </source>
</reference>
<reference key="5">
    <citation type="submission" date="2002-03" db="EMBL/GenBank/DDBJ databases">
        <title>Full-length cDNA from Arabidopsis thaliana.</title>
        <authorList>
            <person name="Brover V.V."/>
            <person name="Troukhan M.E."/>
            <person name="Alexandrov N.A."/>
            <person name="Lu Y.-P."/>
            <person name="Flavell R.B."/>
            <person name="Feldmann K.A."/>
        </authorList>
    </citation>
    <scope>NUCLEOTIDE SEQUENCE [LARGE SCALE MRNA]</scope>
</reference>
<reference key="6">
    <citation type="journal article" date="2003" name="Mol. Cell. Proteomics">
        <title>Proteomics of the chloroplast envelope membranes from Arabidopsis thaliana.</title>
        <authorList>
            <person name="Ferro M."/>
            <person name="Salvi D."/>
            <person name="Brugiere S."/>
            <person name="Miras S."/>
            <person name="Kowalski S."/>
            <person name="Louwagie M."/>
            <person name="Garin J."/>
            <person name="Joyard J."/>
            <person name="Rolland N."/>
        </authorList>
    </citation>
    <scope>CLEAVAGE OF INITIATOR METHIONINE</scope>
    <scope>IDENTIFICATION BY MASS SPECTROMETRY</scope>
    <scope>SUBCELLULAR LOCATION [LARGE SCALE ANALYSIS]</scope>
    <source>
        <strain>cv. Wassilewskija</strain>
    </source>
</reference>
<reference key="7">
    <citation type="journal article" date="2003" name="Protein Sci.">
        <title>Prediction of the plant beta-barrel proteome: a case study of the chloroplast outer envelope.</title>
        <authorList>
            <person name="Schleiff E."/>
            <person name="Eichacker L.A."/>
            <person name="Eckart K."/>
            <person name="Becker T."/>
            <person name="Mirus O."/>
            <person name="Stahl T."/>
            <person name="Soll J."/>
        </authorList>
    </citation>
    <scope>GENE FAMILY</scope>
</reference>
<reference key="8">
    <citation type="journal article" date="2004" name="Proc. Natl. Acad. Sci. U.S.A.">
        <title>The outer plastid envelope protein Oep16: role as precursor translocase in import of protochlorophyllide oxidoreductase A.</title>
        <authorList>
            <person name="Reinbothe S."/>
            <person name="Quigley F."/>
            <person name="Springer A."/>
            <person name="Schemenewitz A."/>
            <person name="Reinbothe C."/>
        </authorList>
    </citation>
    <scope>FUNCTION AS PORA TRANSLOCASE</scope>
</reference>
<reference key="9">
    <citation type="journal article" date="2005" name="Plant J.">
        <title>A role of Toc33 in the protochlorophyllide-dependent plastid import pathway of NADPH:protochlorophyllide oxidoreductase (POR) A.</title>
        <authorList>
            <person name="Reinbothe S."/>
            <person name="Pollmann S."/>
            <person name="Springer A."/>
            <person name="James R.J."/>
            <person name="Tichtinsky G."/>
            <person name="Reinbothe C."/>
        </authorList>
    </citation>
    <scope>ACTIVITY REGULATION</scope>
    <scope>INTERACTION WITH PPORA AND TOC33</scope>
</reference>
<reference key="10">
    <citation type="journal article" date="2006" name="Plant J.">
        <title>Gene duplication, exon gain and neofunctionalization of OEP16-related genes in land plants.</title>
        <authorList>
            <person name="Drea S.C."/>
            <person name="Lao N.T."/>
            <person name="Wolfe K.H."/>
            <person name="Kavanagh T.A."/>
        </authorList>
    </citation>
    <scope>TISSUE SPECIFICITY</scope>
    <scope>INDUCTION</scope>
</reference>
<reference key="11">
    <citation type="journal article" date="2007" name="Proc. Natl. Acad. Sci. U.S.A.">
        <title>Chloroplast biogenesis: the use of mutants to study the etioplast-chloroplast transition.</title>
        <authorList>
            <person name="Philippar K."/>
            <person name="Geis T."/>
            <person name="Ilkavets I."/>
            <person name="Oster U."/>
            <person name="Schwenkert S."/>
            <person name="Meurer J."/>
            <person name="Soll J."/>
        </authorList>
    </citation>
    <scope>FUNCTION</scope>
    <scope>SUBCELLULAR LOCATION</scope>
    <scope>TISSUE SPECIFICITY</scope>
    <scope>GENE FAMILY</scope>
</reference>
<reference key="12">
    <citation type="journal article" date="2007" name="Proc. Natl. Acad. Sci. U.S.A.">
        <title>A plant porphyria related to defects in plastid import of protochlorophyllide oxidoreductase A.</title>
        <authorList>
            <person name="Pollmann S."/>
            <person name="Springer A."/>
            <person name="Buhr F."/>
            <person name="Lahroussi A."/>
            <person name="Samol I."/>
            <person name="Bonneville J.-M."/>
            <person name="Tichtinsky G."/>
            <person name="von Wettstein D."/>
            <person name="Reinbothe C."/>
            <person name="Reinbothe S."/>
        </authorList>
    </citation>
    <scope>FUNCTION</scope>
    <scope>DISRUPTION PHENOTYPE</scope>
    <scope>SUBCELLULAR LOCATION</scope>
</reference>
<reference key="13">
    <citation type="journal article" date="2009" name="Proc. Natl. Acad. Sci. U.S.A.">
        <title>A search for factors influencing etioplast-chloroplast transition.</title>
        <authorList>
            <person name="Pudelski B."/>
            <person name="Soll J."/>
            <person name="Philippar K."/>
        </authorList>
    </citation>
    <scope>FUNCTION</scope>
    <scope>DISRUPTION PHENOTYPE</scope>
    <source>
        <strain>cv. Columbia</strain>
    </source>
</reference>
<reference key="14">
    <citation type="journal article" date="2011" name="Plant Cell Physiol.">
        <title>Implication of the oep16-1 mutation in a flu-independent, singlet oxygen-regulated cell death pathway in Arabidopsis thaliana.</title>
        <authorList>
            <person name="Samol I."/>
            <person name="Buhr F."/>
            <person name="Springer A."/>
            <person name="Pollmann S."/>
            <person name="Lahroussi A."/>
            <person name="Rossig C."/>
            <person name="von Wettstein D."/>
            <person name="Reinbothe C."/>
            <person name="Reinbothe S."/>
        </authorList>
    </citation>
    <scope>FUNCTION</scope>
    <scope>DISRUPTION PHENOTYPE</scope>
</reference>
<reference key="15">
    <citation type="journal article" date="2011" name="Plant Cell Physiol.">
        <title>The outer chloroplast envelope protein OEP16-1 for plastid import of NADPH:protochlorophyllide oxidoreductase A in Arabidopsis thaliana.</title>
        <authorList>
            <person name="Samol I."/>
            <person name="Rossig C."/>
            <person name="Buhr F."/>
            <person name="Springer A."/>
            <person name="Pollmann S."/>
            <person name="Lahroussi A."/>
            <person name="von Wettstein D."/>
            <person name="Reinbothe C."/>
            <person name="Reinbothe S."/>
        </authorList>
    </citation>
    <scope>FUNCTION</scope>
    <scope>DISRUPTION PHENOTYPE</scope>
    <scope>SUBCELLULAR LOCATION</scope>
    <scope>INDUCTION</scope>
</reference>
<sequence>MPSSTFSGTVSTPKLSVAVDMGNPFLNLTVDAFLKIGAVGVTKSLAEDTYKAIDKGSLSKSTLEHALKKLCKEGVYWGAAGGVYIGTEYGIERIRGSRDWKNAMLAGAATGAVLSAVGKKGKDTIVIDAILGGALATASQFVNNHYFY</sequence>
<organism>
    <name type="scientific">Arabidopsis thaliana</name>
    <name type="common">Mouse-ear cress</name>
    <dbReference type="NCBI Taxonomy" id="3702"/>
    <lineage>
        <taxon>Eukaryota</taxon>
        <taxon>Viridiplantae</taxon>
        <taxon>Streptophyta</taxon>
        <taxon>Embryophyta</taxon>
        <taxon>Tracheophyta</taxon>
        <taxon>Spermatophyta</taxon>
        <taxon>Magnoliopsida</taxon>
        <taxon>eudicotyledons</taxon>
        <taxon>Gunneridae</taxon>
        <taxon>Pentapetalae</taxon>
        <taxon>rosids</taxon>
        <taxon>malvids</taxon>
        <taxon>Brassicales</taxon>
        <taxon>Brassicaceae</taxon>
        <taxon>Camelineae</taxon>
        <taxon>Arabidopsis</taxon>
    </lineage>
</organism>
<protein>
    <recommendedName>
        <fullName>Outer envelope pore protein 16-1, chloroplastic</fullName>
    </recommendedName>
    <alternativeName>
        <fullName>Chloroplastic outer envelope pore protein of 16 kDa 1</fullName>
        <shortName>AtOEP16-1</shortName>
        <shortName>OEP16-1</shortName>
    </alternativeName>
    <alternativeName>
        <fullName>Outer plastid envelope protein 16-L</fullName>
        <shortName>AtOEP16-L</shortName>
        <shortName>Leave outer plastid envelope protein 16</shortName>
    </alternativeName>
    <alternativeName>
        <fullName>Protochlorophyllide-dependent translocon protein 16</fullName>
        <shortName>Ptc16</shortName>
    </alternativeName>
</protein>
<keyword id="KW-0150">Chloroplast</keyword>
<keyword id="KW-0406">Ion transport</keyword>
<keyword id="KW-0472">Membrane</keyword>
<keyword id="KW-0934">Plastid</keyword>
<keyword id="KW-1002">Plastid outer membrane</keyword>
<keyword id="KW-0626">Porin</keyword>
<keyword id="KW-1185">Reference proteome</keyword>
<keyword id="KW-0812">Transmembrane</keyword>
<keyword id="KW-1134">Transmembrane beta strand</keyword>
<keyword id="KW-1133">Transmembrane helix</keyword>
<keyword id="KW-0813">Transport</keyword>
<proteinExistence type="evidence at protein level"/>
<comment type="function">
    <text evidence="1 4 7 8 9 10 11">Voltage-dependent high-conductance channel with a slight cation-selectivity; selective for amino acids but excludes triosephosphates or uncharged sugars (By similarity). Non-essential amino acid-selective channel protein and translocation pore for NADPH:protochlorophyllide oxidoreductase A (PORA) and possibly PORB. Involved in PORA precursor (pPORA) import and thus confers photoprotection onto etiolated seedlings during greening.</text>
</comment>
<comment type="activity regulation">
    <text evidence="5">Stimulated by GTP.</text>
</comment>
<comment type="subunit">
    <text evidence="1">Homodimer and oligomers in membrane (By similarity). Forms large complexes including TOC33, pPORA and OEP161 during pPORA import into plastids at the plastid envelope membrane.</text>
</comment>
<comment type="subcellular location">
    <subcellularLocation>
        <location>Plastid</location>
        <location>Chloroplast outer membrane</location>
        <topology>Multi-pass membrane protein</topology>
    </subcellularLocation>
    <subcellularLocation>
        <location>Plastid</location>
        <location>Etioplast membrane</location>
        <topology>Multi-pass membrane protein</topology>
    </subcellularLocation>
</comment>
<comment type="tissue specificity">
    <text evidence="6 7">Expressed predominantly in leaves and cotyledons.</text>
</comment>
<comment type="induction">
    <text evidence="6 10">Transient reduction upon de-etiolation (illuminated 5-day-old etiolated seedlings) (at protein level). Strongly induced by low-temperature stress and weakly in response to osmotic stress, salicylic acid (SA) and exogenous abscisic acid (ABA) treatments.</text>
</comment>
<comment type="disruption phenotype">
    <text evidence="8 9 10 11">Strong red Pchlide fluorescence after 3.5-4 days of growth in the dark, and cell death after subsequent illumination. Conditional seedling lethal phenotype related to defects in import and assembly of NADPH:protochlorophyllide (Pchlide) oxidoreductase A; excess Pchlide accumulated in the dark operates as photosensitizer and provokes cell death during greening.</text>
</comment>
<comment type="similarity">
    <text evidence="12">Belongs to the Tim17/Tim22/Tim23 family. Plastid outer envelope porin OEP16 (TC 1.B.30) subfamily.</text>
</comment>